<name>G6PI_GEOTN</name>
<protein>
    <recommendedName>
        <fullName evidence="1">Glucose-6-phosphate isomerase</fullName>
        <shortName evidence="1">GPI</shortName>
        <ecNumber evidence="1">5.3.1.9</ecNumber>
    </recommendedName>
    <alternativeName>
        <fullName evidence="1">Phosphoglucose isomerase</fullName>
        <shortName evidence="1">PGI</shortName>
    </alternativeName>
    <alternativeName>
        <fullName evidence="1">Phosphohexose isomerase</fullName>
        <shortName evidence="1">PHI</shortName>
    </alternativeName>
</protein>
<accession>A4ISB8</accession>
<proteinExistence type="inferred from homology"/>
<dbReference type="EC" id="5.3.1.9" evidence="1"/>
<dbReference type="EMBL" id="CP000557">
    <property type="protein sequence ID" value="ABO68222.1"/>
    <property type="molecule type" value="Genomic_DNA"/>
</dbReference>
<dbReference type="RefSeq" id="WP_008881792.1">
    <property type="nucleotide sequence ID" value="NC_009328.1"/>
</dbReference>
<dbReference type="SMR" id="A4ISB8"/>
<dbReference type="GeneID" id="87623026"/>
<dbReference type="KEGG" id="gtn:GTNG_2877"/>
<dbReference type="eggNOG" id="COG0166">
    <property type="taxonomic scope" value="Bacteria"/>
</dbReference>
<dbReference type="HOGENOM" id="CLU_037303_0_1_9"/>
<dbReference type="UniPathway" id="UPA00109">
    <property type="reaction ID" value="UER00181"/>
</dbReference>
<dbReference type="UniPathway" id="UPA00138"/>
<dbReference type="Proteomes" id="UP000001578">
    <property type="component" value="Chromosome"/>
</dbReference>
<dbReference type="GO" id="GO:0005829">
    <property type="term" value="C:cytosol"/>
    <property type="evidence" value="ECO:0007669"/>
    <property type="project" value="TreeGrafter"/>
</dbReference>
<dbReference type="GO" id="GO:0097367">
    <property type="term" value="F:carbohydrate derivative binding"/>
    <property type="evidence" value="ECO:0007669"/>
    <property type="project" value="InterPro"/>
</dbReference>
<dbReference type="GO" id="GO:0004347">
    <property type="term" value="F:glucose-6-phosphate isomerase activity"/>
    <property type="evidence" value="ECO:0007669"/>
    <property type="project" value="UniProtKB-UniRule"/>
</dbReference>
<dbReference type="GO" id="GO:0048029">
    <property type="term" value="F:monosaccharide binding"/>
    <property type="evidence" value="ECO:0007669"/>
    <property type="project" value="TreeGrafter"/>
</dbReference>
<dbReference type="GO" id="GO:0006094">
    <property type="term" value="P:gluconeogenesis"/>
    <property type="evidence" value="ECO:0007669"/>
    <property type="project" value="UniProtKB-UniRule"/>
</dbReference>
<dbReference type="GO" id="GO:0051156">
    <property type="term" value="P:glucose 6-phosphate metabolic process"/>
    <property type="evidence" value="ECO:0007669"/>
    <property type="project" value="TreeGrafter"/>
</dbReference>
<dbReference type="GO" id="GO:0006096">
    <property type="term" value="P:glycolytic process"/>
    <property type="evidence" value="ECO:0007669"/>
    <property type="project" value="UniProtKB-UniRule"/>
</dbReference>
<dbReference type="CDD" id="cd05015">
    <property type="entry name" value="SIS_PGI_1"/>
    <property type="match status" value="1"/>
</dbReference>
<dbReference type="CDD" id="cd05016">
    <property type="entry name" value="SIS_PGI_2"/>
    <property type="match status" value="1"/>
</dbReference>
<dbReference type="FunFam" id="3.40.50.10490:FF:000015">
    <property type="entry name" value="Glucose-6-phosphate isomerase"/>
    <property type="match status" value="1"/>
</dbReference>
<dbReference type="FunFam" id="3.40.50.10490:FF:000016">
    <property type="entry name" value="Glucose-6-phosphate isomerase"/>
    <property type="match status" value="1"/>
</dbReference>
<dbReference type="FunFam" id="3.40.50.10490:FF:000020">
    <property type="entry name" value="Glucose-6-phosphate isomerase"/>
    <property type="match status" value="1"/>
</dbReference>
<dbReference type="Gene3D" id="3.40.50.10490">
    <property type="entry name" value="Glucose-6-phosphate isomerase like protein, domain 1"/>
    <property type="match status" value="3"/>
</dbReference>
<dbReference type="HAMAP" id="MF_00473">
    <property type="entry name" value="G6P_isomerase"/>
    <property type="match status" value="1"/>
</dbReference>
<dbReference type="InterPro" id="IPR001672">
    <property type="entry name" value="G6P_Isomerase"/>
</dbReference>
<dbReference type="InterPro" id="IPR018189">
    <property type="entry name" value="Phosphoglucose_isomerase_CS"/>
</dbReference>
<dbReference type="InterPro" id="IPR046348">
    <property type="entry name" value="SIS_dom_sf"/>
</dbReference>
<dbReference type="InterPro" id="IPR035476">
    <property type="entry name" value="SIS_PGI_1"/>
</dbReference>
<dbReference type="InterPro" id="IPR035482">
    <property type="entry name" value="SIS_PGI_2"/>
</dbReference>
<dbReference type="NCBIfam" id="NF010697">
    <property type="entry name" value="PRK14097.1"/>
    <property type="match status" value="1"/>
</dbReference>
<dbReference type="PANTHER" id="PTHR11469">
    <property type="entry name" value="GLUCOSE-6-PHOSPHATE ISOMERASE"/>
    <property type="match status" value="1"/>
</dbReference>
<dbReference type="PANTHER" id="PTHR11469:SF1">
    <property type="entry name" value="GLUCOSE-6-PHOSPHATE ISOMERASE"/>
    <property type="match status" value="1"/>
</dbReference>
<dbReference type="Pfam" id="PF00342">
    <property type="entry name" value="PGI"/>
    <property type="match status" value="1"/>
</dbReference>
<dbReference type="PRINTS" id="PR00662">
    <property type="entry name" value="G6PISOMERASE"/>
</dbReference>
<dbReference type="SUPFAM" id="SSF53697">
    <property type="entry name" value="SIS domain"/>
    <property type="match status" value="1"/>
</dbReference>
<dbReference type="PROSITE" id="PS00765">
    <property type="entry name" value="P_GLUCOSE_ISOMERASE_1"/>
    <property type="match status" value="1"/>
</dbReference>
<dbReference type="PROSITE" id="PS00174">
    <property type="entry name" value="P_GLUCOSE_ISOMERASE_2"/>
    <property type="match status" value="1"/>
</dbReference>
<dbReference type="PROSITE" id="PS51463">
    <property type="entry name" value="P_GLUCOSE_ISOMERASE_3"/>
    <property type="match status" value="1"/>
</dbReference>
<organism>
    <name type="scientific">Geobacillus thermodenitrificans (strain NG80-2)</name>
    <dbReference type="NCBI Taxonomy" id="420246"/>
    <lineage>
        <taxon>Bacteria</taxon>
        <taxon>Bacillati</taxon>
        <taxon>Bacillota</taxon>
        <taxon>Bacilli</taxon>
        <taxon>Bacillales</taxon>
        <taxon>Anoxybacillaceae</taxon>
        <taxon>Geobacillus</taxon>
    </lineage>
</organism>
<comment type="function">
    <text evidence="1">Catalyzes the reversible isomerization of glucose-6-phosphate to fructose-6-phosphate.</text>
</comment>
<comment type="catalytic activity">
    <reaction evidence="1">
        <text>alpha-D-glucose 6-phosphate = beta-D-fructose 6-phosphate</text>
        <dbReference type="Rhea" id="RHEA:11816"/>
        <dbReference type="ChEBI" id="CHEBI:57634"/>
        <dbReference type="ChEBI" id="CHEBI:58225"/>
        <dbReference type="EC" id="5.3.1.9"/>
    </reaction>
</comment>
<comment type="pathway">
    <text evidence="1">Carbohydrate biosynthesis; gluconeogenesis.</text>
</comment>
<comment type="pathway">
    <text evidence="1">Carbohydrate degradation; glycolysis; D-glyceraldehyde 3-phosphate and glycerone phosphate from D-glucose: step 2/4.</text>
</comment>
<comment type="subcellular location">
    <subcellularLocation>
        <location evidence="1">Cytoplasm</location>
    </subcellularLocation>
</comment>
<comment type="similarity">
    <text evidence="1">Belongs to the GPI family.</text>
</comment>
<reference key="1">
    <citation type="journal article" date="2007" name="Proc. Natl. Acad. Sci. U.S.A.">
        <title>Genome and proteome of long-chain alkane degrading Geobacillus thermodenitrificans NG80-2 isolated from a deep-subsurface oil reservoir.</title>
        <authorList>
            <person name="Feng L."/>
            <person name="Wang W."/>
            <person name="Cheng J."/>
            <person name="Ren Y."/>
            <person name="Zhao G."/>
            <person name="Gao C."/>
            <person name="Tang Y."/>
            <person name="Liu X."/>
            <person name="Han W."/>
            <person name="Peng X."/>
            <person name="Liu R."/>
            <person name="Wang L."/>
        </authorList>
    </citation>
    <scope>NUCLEOTIDE SEQUENCE [LARGE SCALE GENOMIC DNA]</scope>
    <source>
        <strain>NG80-2</strain>
    </source>
</reference>
<gene>
    <name evidence="1" type="primary">pgi</name>
    <name type="ordered locus">GTNG_2877</name>
</gene>
<evidence type="ECO:0000255" key="1">
    <source>
        <dbReference type="HAMAP-Rule" id="MF_00473"/>
    </source>
</evidence>
<feature type="chain" id="PRO_1000013970" description="Glucose-6-phosphate isomerase">
    <location>
        <begin position="1"/>
        <end position="449"/>
    </location>
</feature>
<feature type="active site" description="Proton donor" evidence="1">
    <location>
        <position position="290"/>
    </location>
</feature>
<feature type="active site" evidence="1">
    <location>
        <position position="311"/>
    </location>
</feature>
<feature type="active site" evidence="1">
    <location>
        <position position="425"/>
    </location>
</feature>
<feature type="modified residue" description="Phosphothreonine" evidence="1">
    <location>
        <position position="38"/>
    </location>
</feature>
<keyword id="KW-0963">Cytoplasm</keyword>
<keyword id="KW-0312">Gluconeogenesis</keyword>
<keyword id="KW-0324">Glycolysis</keyword>
<keyword id="KW-0413">Isomerase</keyword>
<keyword id="KW-0597">Phosphoprotein</keyword>
<sequence>MTHIRFDYSKALAFFGEHELTYLRDAVKVAHHSLHEKTGVGNDFLGWLDWPVNYDKEEFARIKQAAKKIQSDSDVLLVIGIGGSYLGARAAIEMLHHSFYNALPKEKRSTPQIIFVGNNISSTYMKDVIDFLEGKDFSINVISKSGTTTEPAIAFRIFRKLLEDKYGKEEARRRIYATTDRARGALRTLADEEGYETFVIPDDIGGRYSVLTAVGLLPIAASGADIDAMMEGAAKAREDFSRSELEENAAYQYAAIRNILYNKGKTIELLVNYEPALHYFAEWWKQLFGESEGKDQKGIYPASADFSTDLHSLGQYIQEGRRDLFETVLKLEEPRHELVIEAEESDLDGLNYLAGQTVDFVNTKAFEGTLLAHTDGGVPNLVVTLPKLDEYTFGYLVYFFEKACAMSGYLLGVNPFDQPGVEAYKKNMFALLGKPGYEELKDELEKRLK</sequence>